<proteinExistence type="inferred from homology"/>
<dbReference type="EC" id="4.99.1.9" evidence="1"/>
<dbReference type="EMBL" id="CP000921">
    <property type="protein sequence ID" value="ACO23448.1"/>
    <property type="molecule type" value="Genomic_DNA"/>
</dbReference>
<dbReference type="SMR" id="C1CRD1"/>
<dbReference type="KEGG" id="snt:SPT_1062"/>
<dbReference type="HOGENOM" id="CLU_018884_2_1_9"/>
<dbReference type="UniPathway" id="UPA00252"/>
<dbReference type="GO" id="GO:0005737">
    <property type="term" value="C:cytoplasm"/>
    <property type="evidence" value="ECO:0007669"/>
    <property type="project" value="UniProtKB-SubCell"/>
</dbReference>
<dbReference type="GO" id="GO:0004325">
    <property type="term" value="F:ferrochelatase activity"/>
    <property type="evidence" value="ECO:0007669"/>
    <property type="project" value="UniProtKB-UniRule"/>
</dbReference>
<dbReference type="GO" id="GO:0046872">
    <property type="term" value="F:metal ion binding"/>
    <property type="evidence" value="ECO:0007669"/>
    <property type="project" value="UniProtKB-KW"/>
</dbReference>
<dbReference type="GO" id="GO:0006783">
    <property type="term" value="P:heme biosynthetic process"/>
    <property type="evidence" value="ECO:0007669"/>
    <property type="project" value="UniProtKB-UniRule"/>
</dbReference>
<dbReference type="CDD" id="cd00419">
    <property type="entry name" value="Ferrochelatase_C"/>
    <property type="match status" value="1"/>
</dbReference>
<dbReference type="FunFam" id="3.40.50.1400:FF:000007">
    <property type="entry name" value="Ferrochelatase"/>
    <property type="match status" value="1"/>
</dbReference>
<dbReference type="Gene3D" id="3.40.50.1400">
    <property type="match status" value="2"/>
</dbReference>
<dbReference type="HAMAP" id="MF_00323">
    <property type="entry name" value="Ferrochelatase"/>
    <property type="match status" value="1"/>
</dbReference>
<dbReference type="InterPro" id="IPR001015">
    <property type="entry name" value="Ferrochelatase"/>
</dbReference>
<dbReference type="InterPro" id="IPR019772">
    <property type="entry name" value="Ferrochelatase_AS"/>
</dbReference>
<dbReference type="InterPro" id="IPR033644">
    <property type="entry name" value="Ferrochelatase_C"/>
</dbReference>
<dbReference type="NCBIfam" id="TIGR00109">
    <property type="entry name" value="hemH"/>
    <property type="match status" value="1"/>
</dbReference>
<dbReference type="PANTHER" id="PTHR11108">
    <property type="entry name" value="FERROCHELATASE"/>
    <property type="match status" value="1"/>
</dbReference>
<dbReference type="PANTHER" id="PTHR11108:SF1">
    <property type="entry name" value="FERROCHELATASE, MITOCHONDRIAL"/>
    <property type="match status" value="1"/>
</dbReference>
<dbReference type="Pfam" id="PF00762">
    <property type="entry name" value="Ferrochelatase"/>
    <property type="match status" value="1"/>
</dbReference>
<dbReference type="SUPFAM" id="SSF53800">
    <property type="entry name" value="Chelatase"/>
    <property type="match status" value="1"/>
</dbReference>
<dbReference type="PROSITE" id="PS00534">
    <property type="entry name" value="FERROCHELATASE"/>
    <property type="match status" value="1"/>
</dbReference>
<keyword id="KW-0963">Cytoplasm</keyword>
<keyword id="KW-0350">Heme biosynthesis</keyword>
<keyword id="KW-0408">Iron</keyword>
<keyword id="KW-0456">Lyase</keyword>
<keyword id="KW-0479">Metal-binding</keyword>
<keyword id="KW-0627">Porphyrin biosynthesis</keyword>
<sequence length="364" mass="42783">MKKAILMMTFGSPEEISFEGVAEFFTNIRRGVRPQDHEIQTLYDNYIRIGGTPLQRITREEVNLVKERLGEEYGIYFANKFSRPFIPDVIKQMETDGVEECICLILEPHYSFYSVMGYEKFLESQQIRFLVIKDWYQQQSLLDFWTDEIRKILRNEVGEESFKVIFSAHSVPIFALDYGDPYIDQIFDNSRLIAEQLGLMTDQYTNTWQSESDIGIPWIKPDVLEYLREQKQHPEHYIFVPISFISEHIEVLFDNDVECYDLCQELGVTYHRPPMPNTDSRLIDALVATVRANEDKEFKTFLPEEETFDELAPSATTKDIMKETDDLQMPEFVKKLIEKKGRENVKMPYLIKKMLEKAGKLPKE</sequence>
<organism>
    <name type="scientific">Streptococcus pneumoniae (strain Taiwan19F-14)</name>
    <dbReference type="NCBI Taxonomy" id="487213"/>
    <lineage>
        <taxon>Bacteria</taxon>
        <taxon>Bacillati</taxon>
        <taxon>Bacillota</taxon>
        <taxon>Bacilli</taxon>
        <taxon>Lactobacillales</taxon>
        <taxon>Streptococcaceae</taxon>
        <taxon>Streptococcus</taxon>
    </lineage>
</organism>
<feature type="chain" id="PRO_1000189994" description="Coproporphyrin III ferrochelatase">
    <location>
        <begin position="1"/>
        <end position="364"/>
    </location>
</feature>
<feature type="binding site" evidence="1">
    <location>
        <position position="29"/>
    </location>
    <ligand>
        <name>Fe-coproporphyrin III</name>
        <dbReference type="ChEBI" id="CHEBI:68438"/>
    </ligand>
</feature>
<feature type="binding site" evidence="1">
    <location>
        <position position="118"/>
    </location>
    <ligand>
        <name>Fe-coproporphyrin III</name>
        <dbReference type="ChEBI" id="CHEBI:68438"/>
    </ligand>
</feature>
<feature type="binding site" evidence="1">
    <location>
        <position position="169"/>
    </location>
    <ligand>
        <name>Fe(2+)</name>
        <dbReference type="ChEBI" id="CHEBI:29033"/>
    </ligand>
</feature>
<feature type="binding site" evidence="1">
    <location>
        <position position="250"/>
    </location>
    <ligand>
        <name>Fe(2+)</name>
        <dbReference type="ChEBI" id="CHEBI:29033"/>
    </ligand>
</feature>
<gene>
    <name evidence="1" type="primary">cpfC</name>
    <name type="ordered locus">SPT_1062</name>
</gene>
<evidence type="ECO:0000255" key="1">
    <source>
        <dbReference type="HAMAP-Rule" id="MF_00323"/>
    </source>
</evidence>
<protein>
    <recommendedName>
        <fullName evidence="1">Coproporphyrin III ferrochelatase</fullName>
        <ecNumber evidence="1">4.99.1.9</ecNumber>
    </recommendedName>
</protein>
<reference key="1">
    <citation type="journal article" date="2010" name="Genome Biol.">
        <title>Structure and dynamics of the pan-genome of Streptococcus pneumoniae and closely related species.</title>
        <authorList>
            <person name="Donati C."/>
            <person name="Hiller N.L."/>
            <person name="Tettelin H."/>
            <person name="Muzzi A."/>
            <person name="Croucher N.J."/>
            <person name="Angiuoli S.V."/>
            <person name="Oggioni M."/>
            <person name="Dunning Hotopp J.C."/>
            <person name="Hu F.Z."/>
            <person name="Riley D.R."/>
            <person name="Covacci A."/>
            <person name="Mitchell T.J."/>
            <person name="Bentley S.D."/>
            <person name="Kilian M."/>
            <person name="Ehrlich G.D."/>
            <person name="Rappuoli R."/>
            <person name="Moxon E.R."/>
            <person name="Masignani V."/>
        </authorList>
    </citation>
    <scope>NUCLEOTIDE SEQUENCE [LARGE SCALE GENOMIC DNA]</scope>
    <source>
        <strain>Taiwan19F-14</strain>
    </source>
</reference>
<comment type="function">
    <text evidence="1">Involved in coproporphyrin-dependent heme b biosynthesis. Catalyzes the insertion of ferrous iron into coproporphyrin III to form Fe-coproporphyrin III.</text>
</comment>
<comment type="catalytic activity">
    <reaction evidence="1">
        <text>Fe-coproporphyrin III + 2 H(+) = coproporphyrin III + Fe(2+)</text>
        <dbReference type="Rhea" id="RHEA:49572"/>
        <dbReference type="ChEBI" id="CHEBI:15378"/>
        <dbReference type="ChEBI" id="CHEBI:29033"/>
        <dbReference type="ChEBI" id="CHEBI:68438"/>
        <dbReference type="ChEBI" id="CHEBI:131725"/>
        <dbReference type="EC" id="4.99.1.9"/>
    </reaction>
    <physiologicalReaction direction="right-to-left" evidence="1">
        <dbReference type="Rhea" id="RHEA:49574"/>
    </physiologicalReaction>
</comment>
<comment type="pathway">
    <text evidence="1">Porphyrin-containing compound metabolism; protoheme biosynthesis.</text>
</comment>
<comment type="subcellular location">
    <subcellularLocation>
        <location evidence="1">Cytoplasm</location>
    </subcellularLocation>
</comment>
<comment type="similarity">
    <text evidence="1">Belongs to the ferrochelatase family.</text>
</comment>
<accession>C1CRD1</accession>
<name>CPFC_STRZT</name>